<sequence>MTKLSGSDSKSTLYCSFCGKSQHEVRKLIAGPTVFICDECVELCNDIIREETRGALHKGDGSVPTPQEICTILDQYVIGQSKAKRVLSVAVHNHYKRLNHGGKDADVELAKSNILLIGPTGCGKTLLAETLARTFDVPFTMADATTLTEAGYVGEDVENIILKLLQASDYNVERAQRGIVYIDEIDKITRKSDNPSITRDVSGEGVQQALLKLMEGTTASVPPQGGRKHPQQEFLQVDTTNILFICGGAFAGLDRIIADRLEGKSIGFGAHVAAPDERRTGEILQECEPEDLLKFGLIPEFVGRLPVLATLEDLDQSALVRILTEPKNALVKQYQKLFELEDAKLEFTEDALAAIAKKGIERKTGARGLRSILEGILLDTMFELPSLEGVSEIIVDKDVAEGKKEPVRVFAQKEKDASPGAA</sequence>
<proteinExistence type="inferred from homology"/>
<organism>
    <name type="scientific">Zymomonas mobilis subsp. mobilis (strain ATCC 31821 / ZM4 / CP4)</name>
    <dbReference type="NCBI Taxonomy" id="264203"/>
    <lineage>
        <taxon>Bacteria</taxon>
        <taxon>Pseudomonadati</taxon>
        <taxon>Pseudomonadota</taxon>
        <taxon>Alphaproteobacteria</taxon>
        <taxon>Sphingomonadales</taxon>
        <taxon>Zymomonadaceae</taxon>
        <taxon>Zymomonas</taxon>
    </lineage>
</organism>
<accession>Q5NNY7</accession>
<protein>
    <recommendedName>
        <fullName evidence="1">ATP-dependent Clp protease ATP-binding subunit ClpX</fullName>
    </recommendedName>
</protein>
<comment type="function">
    <text evidence="1">ATP-dependent specificity component of the Clp protease. It directs the protease to specific substrates. Can perform chaperone functions in the absence of ClpP.</text>
</comment>
<comment type="subunit">
    <text evidence="1">Component of the ClpX-ClpP complex. Forms a hexameric ring that, in the presence of ATP, binds to fourteen ClpP subunits assembled into a disk-like structure with a central cavity, resembling the structure of eukaryotic proteasomes.</text>
</comment>
<comment type="similarity">
    <text evidence="1">Belongs to the ClpX chaperone family.</text>
</comment>
<evidence type="ECO:0000255" key="1">
    <source>
        <dbReference type="HAMAP-Rule" id="MF_00175"/>
    </source>
</evidence>
<evidence type="ECO:0000255" key="2">
    <source>
        <dbReference type="PROSITE-ProRule" id="PRU01250"/>
    </source>
</evidence>
<reference key="1">
    <citation type="journal article" date="2005" name="Nat. Biotechnol.">
        <title>The genome sequence of the ethanologenic bacterium Zymomonas mobilis ZM4.</title>
        <authorList>
            <person name="Seo J.-S."/>
            <person name="Chong H."/>
            <person name="Park H.S."/>
            <person name="Yoon K.-O."/>
            <person name="Jung C."/>
            <person name="Kim J.J."/>
            <person name="Hong J.H."/>
            <person name="Kim H."/>
            <person name="Kim J.-H."/>
            <person name="Kil J.-I."/>
            <person name="Park C.J."/>
            <person name="Oh H.-M."/>
            <person name="Lee J.-S."/>
            <person name="Jin S.-J."/>
            <person name="Um H.-W."/>
            <person name="Lee H.-J."/>
            <person name="Oh S.-J."/>
            <person name="Kim J.Y."/>
            <person name="Kang H.L."/>
            <person name="Lee S.Y."/>
            <person name="Lee K.J."/>
            <person name="Kang H.S."/>
        </authorList>
    </citation>
    <scope>NUCLEOTIDE SEQUENCE [LARGE SCALE GENOMIC DNA]</scope>
    <source>
        <strain>ATCC 31821 / ZM4 / CP4</strain>
    </source>
</reference>
<dbReference type="EMBL" id="AE008692">
    <property type="protein sequence ID" value="AAV89573.1"/>
    <property type="molecule type" value="Genomic_DNA"/>
</dbReference>
<dbReference type="RefSeq" id="WP_011240806.1">
    <property type="nucleotide sequence ID" value="NZ_CP035711.1"/>
</dbReference>
<dbReference type="SMR" id="Q5NNY7"/>
<dbReference type="STRING" id="264203.ZMO0949"/>
<dbReference type="GeneID" id="79903902"/>
<dbReference type="KEGG" id="zmo:ZMO0949"/>
<dbReference type="eggNOG" id="COG1219">
    <property type="taxonomic scope" value="Bacteria"/>
</dbReference>
<dbReference type="HOGENOM" id="CLU_014218_8_2_5"/>
<dbReference type="Proteomes" id="UP000001173">
    <property type="component" value="Chromosome"/>
</dbReference>
<dbReference type="GO" id="GO:0009376">
    <property type="term" value="C:HslUV protease complex"/>
    <property type="evidence" value="ECO:0007669"/>
    <property type="project" value="TreeGrafter"/>
</dbReference>
<dbReference type="GO" id="GO:0005524">
    <property type="term" value="F:ATP binding"/>
    <property type="evidence" value="ECO:0007669"/>
    <property type="project" value="UniProtKB-UniRule"/>
</dbReference>
<dbReference type="GO" id="GO:0016887">
    <property type="term" value="F:ATP hydrolysis activity"/>
    <property type="evidence" value="ECO:0007669"/>
    <property type="project" value="InterPro"/>
</dbReference>
<dbReference type="GO" id="GO:0140662">
    <property type="term" value="F:ATP-dependent protein folding chaperone"/>
    <property type="evidence" value="ECO:0007669"/>
    <property type="project" value="InterPro"/>
</dbReference>
<dbReference type="GO" id="GO:0046983">
    <property type="term" value="F:protein dimerization activity"/>
    <property type="evidence" value="ECO:0007669"/>
    <property type="project" value="InterPro"/>
</dbReference>
<dbReference type="GO" id="GO:0051082">
    <property type="term" value="F:unfolded protein binding"/>
    <property type="evidence" value="ECO:0007669"/>
    <property type="project" value="UniProtKB-UniRule"/>
</dbReference>
<dbReference type="GO" id="GO:0008270">
    <property type="term" value="F:zinc ion binding"/>
    <property type="evidence" value="ECO:0007669"/>
    <property type="project" value="InterPro"/>
</dbReference>
<dbReference type="GO" id="GO:0051301">
    <property type="term" value="P:cell division"/>
    <property type="evidence" value="ECO:0007669"/>
    <property type="project" value="TreeGrafter"/>
</dbReference>
<dbReference type="GO" id="GO:0051603">
    <property type="term" value="P:proteolysis involved in protein catabolic process"/>
    <property type="evidence" value="ECO:0007669"/>
    <property type="project" value="TreeGrafter"/>
</dbReference>
<dbReference type="CDD" id="cd19497">
    <property type="entry name" value="RecA-like_ClpX"/>
    <property type="match status" value="1"/>
</dbReference>
<dbReference type="FunFam" id="1.10.8.60:FF:000002">
    <property type="entry name" value="ATP-dependent Clp protease ATP-binding subunit ClpX"/>
    <property type="match status" value="1"/>
</dbReference>
<dbReference type="FunFam" id="3.40.50.300:FF:000005">
    <property type="entry name" value="ATP-dependent Clp protease ATP-binding subunit ClpX"/>
    <property type="match status" value="1"/>
</dbReference>
<dbReference type="Gene3D" id="1.10.8.60">
    <property type="match status" value="1"/>
</dbReference>
<dbReference type="Gene3D" id="6.20.220.10">
    <property type="entry name" value="ClpX chaperone, C4-type zinc finger domain"/>
    <property type="match status" value="1"/>
</dbReference>
<dbReference type="Gene3D" id="3.40.50.300">
    <property type="entry name" value="P-loop containing nucleotide triphosphate hydrolases"/>
    <property type="match status" value="1"/>
</dbReference>
<dbReference type="HAMAP" id="MF_00175">
    <property type="entry name" value="ClpX"/>
    <property type="match status" value="1"/>
</dbReference>
<dbReference type="InterPro" id="IPR003593">
    <property type="entry name" value="AAA+_ATPase"/>
</dbReference>
<dbReference type="InterPro" id="IPR050052">
    <property type="entry name" value="ATP-dep_Clp_protease_ClpX"/>
</dbReference>
<dbReference type="InterPro" id="IPR003959">
    <property type="entry name" value="ATPase_AAA_core"/>
</dbReference>
<dbReference type="InterPro" id="IPR019489">
    <property type="entry name" value="Clp_ATPase_C"/>
</dbReference>
<dbReference type="InterPro" id="IPR004487">
    <property type="entry name" value="Clp_protease_ATP-bd_su_ClpX"/>
</dbReference>
<dbReference type="InterPro" id="IPR046425">
    <property type="entry name" value="ClpX_bact"/>
</dbReference>
<dbReference type="InterPro" id="IPR027417">
    <property type="entry name" value="P-loop_NTPase"/>
</dbReference>
<dbReference type="InterPro" id="IPR010603">
    <property type="entry name" value="Znf_CppX_C4"/>
</dbReference>
<dbReference type="InterPro" id="IPR038366">
    <property type="entry name" value="Znf_CppX_C4_sf"/>
</dbReference>
<dbReference type="NCBIfam" id="TIGR00382">
    <property type="entry name" value="clpX"/>
    <property type="match status" value="1"/>
</dbReference>
<dbReference type="NCBIfam" id="NF003745">
    <property type="entry name" value="PRK05342.1"/>
    <property type="match status" value="1"/>
</dbReference>
<dbReference type="PANTHER" id="PTHR48102:SF7">
    <property type="entry name" value="ATP-DEPENDENT CLP PROTEASE ATP-BINDING SUBUNIT CLPX-LIKE, MITOCHONDRIAL"/>
    <property type="match status" value="1"/>
</dbReference>
<dbReference type="PANTHER" id="PTHR48102">
    <property type="entry name" value="ATP-DEPENDENT CLP PROTEASE ATP-BINDING SUBUNIT CLPX-LIKE, MITOCHONDRIAL-RELATED"/>
    <property type="match status" value="1"/>
</dbReference>
<dbReference type="Pfam" id="PF07724">
    <property type="entry name" value="AAA_2"/>
    <property type="match status" value="1"/>
</dbReference>
<dbReference type="Pfam" id="PF10431">
    <property type="entry name" value="ClpB_D2-small"/>
    <property type="match status" value="1"/>
</dbReference>
<dbReference type="Pfam" id="PF06689">
    <property type="entry name" value="zf-C4_ClpX"/>
    <property type="match status" value="1"/>
</dbReference>
<dbReference type="SMART" id="SM00382">
    <property type="entry name" value="AAA"/>
    <property type="match status" value="1"/>
</dbReference>
<dbReference type="SMART" id="SM01086">
    <property type="entry name" value="ClpB_D2-small"/>
    <property type="match status" value="1"/>
</dbReference>
<dbReference type="SMART" id="SM00994">
    <property type="entry name" value="zf-C4_ClpX"/>
    <property type="match status" value="1"/>
</dbReference>
<dbReference type="SUPFAM" id="SSF57716">
    <property type="entry name" value="Glucocorticoid receptor-like (DNA-binding domain)"/>
    <property type="match status" value="1"/>
</dbReference>
<dbReference type="SUPFAM" id="SSF52540">
    <property type="entry name" value="P-loop containing nucleoside triphosphate hydrolases"/>
    <property type="match status" value="1"/>
</dbReference>
<dbReference type="PROSITE" id="PS51902">
    <property type="entry name" value="CLPX_ZB"/>
    <property type="match status" value="1"/>
</dbReference>
<name>CLPX_ZYMMO</name>
<keyword id="KW-0067">ATP-binding</keyword>
<keyword id="KW-0143">Chaperone</keyword>
<keyword id="KW-0479">Metal-binding</keyword>
<keyword id="KW-0547">Nucleotide-binding</keyword>
<keyword id="KW-1185">Reference proteome</keyword>
<keyword id="KW-0862">Zinc</keyword>
<feature type="chain" id="PRO_0000160466" description="ATP-dependent Clp protease ATP-binding subunit ClpX">
    <location>
        <begin position="1"/>
        <end position="422"/>
    </location>
</feature>
<feature type="domain" description="ClpX-type ZB" evidence="2">
    <location>
        <begin position="3"/>
        <end position="56"/>
    </location>
</feature>
<feature type="binding site" evidence="2">
    <location>
        <position position="15"/>
    </location>
    <ligand>
        <name>Zn(2+)</name>
        <dbReference type="ChEBI" id="CHEBI:29105"/>
    </ligand>
</feature>
<feature type="binding site" evidence="2">
    <location>
        <position position="18"/>
    </location>
    <ligand>
        <name>Zn(2+)</name>
        <dbReference type="ChEBI" id="CHEBI:29105"/>
    </ligand>
</feature>
<feature type="binding site" evidence="2">
    <location>
        <position position="37"/>
    </location>
    <ligand>
        <name>Zn(2+)</name>
        <dbReference type="ChEBI" id="CHEBI:29105"/>
    </ligand>
</feature>
<feature type="binding site" evidence="2">
    <location>
        <position position="40"/>
    </location>
    <ligand>
        <name>Zn(2+)</name>
        <dbReference type="ChEBI" id="CHEBI:29105"/>
    </ligand>
</feature>
<feature type="binding site" evidence="1">
    <location>
        <begin position="119"/>
        <end position="126"/>
    </location>
    <ligand>
        <name>ATP</name>
        <dbReference type="ChEBI" id="CHEBI:30616"/>
    </ligand>
</feature>
<gene>
    <name evidence="1" type="primary">clpX</name>
    <name type="ordered locus">ZMO0949</name>
</gene>